<evidence type="ECO:0000255" key="1">
    <source>
        <dbReference type="PROSITE-ProRule" id="PRU00258"/>
    </source>
</evidence>
<evidence type="ECO:0000256" key="2">
    <source>
        <dbReference type="SAM" id="MobiDB-lite"/>
    </source>
</evidence>
<evidence type="ECO:0000269" key="3">
    <source>
    </source>
</evidence>
<evidence type="ECO:0000303" key="4">
    <source>
    </source>
</evidence>
<evidence type="ECO:0000303" key="5">
    <source>
    </source>
</evidence>
<evidence type="ECO:0000305" key="6"/>
<evidence type="ECO:0000305" key="7">
    <source>
    </source>
</evidence>
<evidence type="ECO:0000305" key="8">
    <source>
    </source>
</evidence>
<evidence type="ECO:0000305" key="9">
    <source>
    </source>
</evidence>
<evidence type="ECO:0000312" key="10">
    <source>
        <dbReference type="EMBL" id="EFL30526.1"/>
    </source>
</evidence>
<accession>D9XF47</accession>
<accession>Q4JFF2</accession>
<accession>Q5IW58</accession>
<protein>
    <recommendedName>
        <fullName evidence="6">Phosphinothricin tripeptide synthetase PhsC</fullName>
        <shortName evidence="6">PTT synthase PhsC</shortName>
        <ecNumber evidence="3">6.2.1.67</ecNumber>
    </recommendedName>
    <alternativeName>
        <fullName evidence="6">L-alanine--[L-alanyl-carrier protein] ligase</fullName>
    </alternativeName>
    <alternativeName>
        <fullName evidence="6">Nonribosomal peptide synthetase PhsC</fullName>
    </alternativeName>
    <alternativeName>
        <fullName evidence="5">Phosphinothricin tripeptide synthetase II</fullName>
        <shortName evidence="5">PTT synthetase II</shortName>
    </alternativeName>
</protein>
<proteinExistence type="evidence at protein level"/>
<comment type="function">
    <text evidence="3">Involved in the biosynthesis of phosphinothricin tripeptide (PTT), also known as bialaphos (BA), a natural-product antibiotic and potent herbicide (PubMed:16251301). Adenylates L-alanine and loads it onto a peptidyl carrier domain via a thioester linkage to the phosphopanthetheine moiety (PubMed:16251301). Shows weaker activity with aminobutyric acid and L-serine (PubMed:16251301).</text>
</comment>
<comment type="catalytic activity">
    <reaction evidence="3">
        <text>holo-[peptidyl-carrier protein] + L-alanine + ATP = L-alanyl-[peptidyl-carrier protein] + AMP + diphosphate</text>
        <dbReference type="Rhea" id="RHEA:61800"/>
        <dbReference type="Rhea" id="RHEA-COMP:11480"/>
        <dbReference type="Rhea" id="RHEA-COMP:15938"/>
        <dbReference type="ChEBI" id="CHEBI:30616"/>
        <dbReference type="ChEBI" id="CHEBI:33019"/>
        <dbReference type="ChEBI" id="CHEBI:57972"/>
        <dbReference type="ChEBI" id="CHEBI:64479"/>
        <dbReference type="ChEBI" id="CHEBI:144958"/>
        <dbReference type="ChEBI" id="CHEBI:456215"/>
        <dbReference type="EC" id="6.2.1.67"/>
    </reaction>
    <physiologicalReaction direction="left-to-right" evidence="3">
        <dbReference type="Rhea" id="RHEA:61801"/>
    </physiologicalReaction>
</comment>
<comment type="cofactor">
    <cofactor evidence="6">
        <name>pantetheine 4'-phosphate</name>
        <dbReference type="ChEBI" id="CHEBI:47942"/>
    </cofactor>
</comment>
<comment type="pathway">
    <text evidence="7 8 9">Secondary metabolite biosynthesis; bialaphos biosynthesis.</text>
</comment>
<comment type="domain">
    <text evidence="9">Modular protein that contains a condensation domain, an adenylation domain which activates the alanine residue into an aminoacyl-AMP ester and a peptidyl carrier protein domain which bears a phosphopantetheinyl arm to attach the activated amino acid.</text>
</comment>
<comment type="disruption phenotype">
    <text evidence="3">Mutant cannot produce PTT. PhsC cannot take on the function of PhsB and vice versa.</text>
</comment>
<comment type="similarity">
    <text evidence="6">Belongs to the NRP synthetase family.</text>
</comment>
<keyword id="KW-0045">Antibiotic biosynthesis</keyword>
<keyword id="KW-0436">Ligase</keyword>
<keyword id="KW-0596">Phosphopantetheine</keyword>
<keyword id="KW-0597">Phosphoprotein</keyword>
<keyword id="KW-1185">Reference proteome</keyword>
<gene>
    <name evidence="4" type="primary">phsC</name>
    <name evidence="10" type="ORF">SSQG_01044</name>
</gene>
<name>PHSC_STRVT</name>
<dbReference type="EC" id="6.2.1.67" evidence="3"/>
<dbReference type="EMBL" id="X65195">
    <property type="protein sequence ID" value="CAJ14039.1"/>
    <property type="molecule type" value="Genomic_DNA"/>
</dbReference>
<dbReference type="EMBL" id="AY632421">
    <property type="protein sequence ID" value="AAU00074.1"/>
    <property type="molecule type" value="Genomic_DNA"/>
</dbReference>
<dbReference type="EMBL" id="GG657757">
    <property type="protein sequence ID" value="EFL30526.1"/>
    <property type="molecule type" value="Genomic_DNA"/>
</dbReference>
<dbReference type="RefSeq" id="WP_003988641.1">
    <property type="nucleotide sequence ID" value="NZ_GG657757.1"/>
</dbReference>
<dbReference type="SMR" id="D9XF47"/>
<dbReference type="STRING" id="591159.SSQG_01044"/>
<dbReference type="KEGG" id="ag:CAJ14039"/>
<dbReference type="eggNOG" id="COG1020">
    <property type="taxonomic scope" value="Bacteria"/>
</dbReference>
<dbReference type="HOGENOM" id="CLU_000022_2_4_11"/>
<dbReference type="OrthoDB" id="2472181at2"/>
<dbReference type="BRENDA" id="6.2.1.67">
    <property type="organism ID" value="6116"/>
</dbReference>
<dbReference type="UniPathway" id="UPA00197"/>
<dbReference type="Proteomes" id="UP000004184">
    <property type="component" value="Unassembled WGS sequence"/>
</dbReference>
<dbReference type="GO" id="GO:0005829">
    <property type="term" value="C:cytosol"/>
    <property type="evidence" value="ECO:0007669"/>
    <property type="project" value="TreeGrafter"/>
</dbReference>
<dbReference type="GO" id="GO:0016874">
    <property type="term" value="F:ligase activity"/>
    <property type="evidence" value="ECO:0007669"/>
    <property type="project" value="UniProtKB-KW"/>
</dbReference>
<dbReference type="GO" id="GO:0031177">
    <property type="term" value="F:phosphopantetheine binding"/>
    <property type="evidence" value="ECO:0007669"/>
    <property type="project" value="InterPro"/>
</dbReference>
<dbReference type="GO" id="GO:0043041">
    <property type="term" value="P:amino acid activation for nonribosomal peptide biosynthetic process"/>
    <property type="evidence" value="ECO:0007669"/>
    <property type="project" value="TreeGrafter"/>
</dbReference>
<dbReference type="GO" id="GO:0017000">
    <property type="term" value="P:antibiotic biosynthetic process"/>
    <property type="evidence" value="ECO:0007669"/>
    <property type="project" value="UniProtKB-KW"/>
</dbReference>
<dbReference type="GO" id="GO:0008610">
    <property type="term" value="P:lipid biosynthetic process"/>
    <property type="evidence" value="ECO:0007669"/>
    <property type="project" value="UniProtKB-ARBA"/>
</dbReference>
<dbReference type="GO" id="GO:0044550">
    <property type="term" value="P:secondary metabolite biosynthetic process"/>
    <property type="evidence" value="ECO:0007669"/>
    <property type="project" value="TreeGrafter"/>
</dbReference>
<dbReference type="CDD" id="cd17652">
    <property type="entry name" value="A_NRPS_CmdD_like"/>
    <property type="match status" value="1"/>
</dbReference>
<dbReference type="CDD" id="cd19531">
    <property type="entry name" value="LCL_NRPS-like"/>
    <property type="match status" value="1"/>
</dbReference>
<dbReference type="FunFam" id="3.30.300.30:FF:000010">
    <property type="entry name" value="Enterobactin synthetase component F"/>
    <property type="match status" value="1"/>
</dbReference>
<dbReference type="FunFam" id="3.40.50.12780:FF:000012">
    <property type="entry name" value="Non-ribosomal peptide synthetase"/>
    <property type="match status" value="1"/>
</dbReference>
<dbReference type="FunFam" id="3.40.50.980:FF:000001">
    <property type="entry name" value="Non-ribosomal peptide synthetase"/>
    <property type="match status" value="1"/>
</dbReference>
<dbReference type="Gene3D" id="3.30.300.30">
    <property type="match status" value="1"/>
</dbReference>
<dbReference type="Gene3D" id="3.40.50.980">
    <property type="match status" value="2"/>
</dbReference>
<dbReference type="Gene3D" id="1.10.1200.10">
    <property type="entry name" value="ACP-like"/>
    <property type="match status" value="1"/>
</dbReference>
<dbReference type="Gene3D" id="3.30.559.10">
    <property type="entry name" value="Chloramphenicol acetyltransferase-like domain"/>
    <property type="match status" value="1"/>
</dbReference>
<dbReference type="Gene3D" id="2.30.38.10">
    <property type="entry name" value="Luciferase, Domain 3"/>
    <property type="match status" value="1"/>
</dbReference>
<dbReference type="Gene3D" id="3.30.559.30">
    <property type="entry name" value="Nonribosomal peptide synthetase, condensation domain"/>
    <property type="match status" value="1"/>
</dbReference>
<dbReference type="InterPro" id="IPR010071">
    <property type="entry name" value="AA_adenyl_dom"/>
</dbReference>
<dbReference type="InterPro" id="IPR036736">
    <property type="entry name" value="ACP-like_sf"/>
</dbReference>
<dbReference type="InterPro" id="IPR025110">
    <property type="entry name" value="AMP-bd_C"/>
</dbReference>
<dbReference type="InterPro" id="IPR045851">
    <property type="entry name" value="AMP-bd_C_sf"/>
</dbReference>
<dbReference type="InterPro" id="IPR020845">
    <property type="entry name" value="AMP-binding_CS"/>
</dbReference>
<dbReference type="InterPro" id="IPR000873">
    <property type="entry name" value="AMP-dep_synth/lig_dom"/>
</dbReference>
<dbReference type="InterPro" id="IPR023213">
    <property type="entry name" value="CAT-like_dom_sf"/>
</dbReference>
<dbReference type="InterPro" id="IPR001242">
    <property type="entry name" value="Condensatn"/>
</dbReference>
<dbReference type="InterPro" id="IPR020806">
    <property type="entry name" value="PKS_PP-bd"/>
</dbReference>
<dbReference type="InterPro" id="IPR009081">
    <property type="entry name" value="PP-bd_ACP"/>
</dbReference>
<dbReference type="InterPro" id="IPR006162">
    <property type="entry name" value="Ppantetheine_attach_site"/>
</dbReference>
<dbReference type="NCBIfam" id="TIGR01733">
    <property type="entry name" value="AA-adenyl-dom"/>
    <property type="match status" value="1"/>
</dbReference>
<dbReference type="PANTHER" id="PTHR45527:SF1">
    <property type="entry name" value="FATTY ACID SYNTHASE"/>
    <property type="match status" value="1"/>
</dbReference>
<dbReference type="PANTHER" id="PTHR45527">
    <property type="entry name" value="NONRIBOSOMAL PEPTIDE SYNTHETASE"/>
    <property type="match status" value="1"/>
</dbReference>
<dbReference type="Pfam" id="PF00501">
    <property type="entry name" value="AMP-binding"/>
    <property type="match status" value="1"/>
</dbReference>
<dbReference type="Pfam" id="PF13193">
    <property type="entry name" value="AMP-binding_C"/>
    <property type="match status" value="1"/>
</dbReference>
<dbReference type="Pfam" id="PF00668">
    <property type="entry name" value="Condensation"/>
    <property type="match status" value="1"/>
</dbReference>
<dbReference type="Pfam" id="PF00550">
    <property type="entry name" value="PP-binding"/>
    <property type="match status" value="1"/>
</dbReference>
<dbReference type="SMART" id="SM00823">
    <property type="entry name" value="PKS_PP"/>
    <property type="match status" value="1"/>
</dbReference>
<dbReference type="SUPFAM" id="SSF56801">
    <property type="entry name" value="Acetyl-CoA synthetase-like"/>
    <property type="match status" value="1"/>
</dbReference>
<dbReference type="SUPFAM" id="SSF47336">
    <property type="entry name" value="ACP-like"/>
    <property type="match status" value="1"/>
</dbReference>
<dbReference type="SUPFAM" id="SSF52777">
    <property type="entry name" value="CoA-dependent acyltransferases"/>
    <property type="match status" value="2"/>
</dbReference>
<dbReference type="PROSITE" id="PS00455">
    <property type="entry name" value="AMP_BINDING"/>
    <property type="match status" value="1"/>
</dbReference>
<dbReference type="PROSITE" id="PS50075">
    <property type="entry name" value="CARRIER"/>
    <property type="match status" value="1"/>
</dbReference>
<dbReference type="PROSITE" id="PS00012">
    <property type="entry name" value="PHOSPHOPANTETHEINE"/>
    <property type="match status" value="1"/>
</dbReference>
<organism>
    <name type="scientific">Streptomyces viridochromogenes (strain DSM 40736 / JCM 4977 / BCRC 1201 / Tue 494)</name>
    <dbReference type="NCBI Taxonomy" id="591159"/>
    <lineage>
        <taxon>Bacteria</taxon>
        <taxon>Bacillati</taxon>
        <taxon>Actinomycetota</taxon>
        <taxon>Actinomycetes</taxon>
        <taxon>Kitasatosporales</taxon>
        <taxon>Streptomycetaceae</taxon>
        <taxon>Streptomyces</taxon>
    </lineage>
</organism>
<sequence length="1086" mass="118822">MEDLQTRIAALSPKQRALFESRLRAAAAPGPDPAIPRRPDDDGPVPLSFAQHRLWFLDQLEPGRPVYNVSASLRIGRPVTTEAVRDALGALTRRHEVLRTVFPADGGEPRQHIADSLTPPLTETDLRALPDSARAAAALRLCAEDKQRPFDLSSGPLLRCLLLRLRDDDALLFLTFHHTVFDGWSIGLLRRDLTALLHAAETGTDAGLPPLPIQYADFADWQRRMLDEKRLGELLGYWRERIRGAPPVIDLPFDRPRPAVATTEGARRRFALPAELTTALRDLAARSGATPFMTMLTVFAALLHRWSGERDMVIGTPVANRARPELDDLIGFFANTLAMRVRIEPGMSFGDLLAQVRQTVVEALARQDLPFERLVDEARTERTLTHNPLFQVAFVMEDGRDASELDTLLPERARDTHTPDSAKFDLTLVLTDRESTYTGYFEYNTALFEPVTIDRLGERLALLARSVAADPGWELAALPVLTRDEIRHLKEVNAPVADDPRHHRTLHGVLEDSARRHPDHTAVEAPDRQLTYRELDEAANRLAHHLLALGVRPEQPVGVALDGTADAIVATFAVLKAGAVLLPLDPEYPAERLEHILRRSGATLLLTQRSLAGRFAGNDVTTVLLDDDATRAALADGPADRPGLPIAPDRLAYVIFTSGSTGVPKGVMVPHRGIGSLTRSAEQFAQTPDSRVLRFASPSFDVSLLELLMTFDAGATLVLEPRALLVPGEDLARLIRERRVSTVLLSPSALSTLTAGELPGLRTVVMAGEAATLELAQQWCDGRDVFNGYGPTEATVLATIARCAPDRVPPLGRPVAGYTVHVLDDTLRPVPFGRQGELFLGGVGLARGYLDQPDVTADRFLPDPSGTEPGARLYRTGDVVRWGADGELEFLGRTDHQVKLRGFRIELGEIETRLEDHPGVRTAVVLVRGEGSDRRLAGYAVRAPGEERPTAAGLRQWLRDRLPGYMVPELFLVLDALPTSPNGKLDREALPDPLAQSGDTAGNRPPLLDPVEERISGIWQEVLGIAPPGSADNFFEVGGNSLSATRIIARVNQAFGVRLPVRSLFVEPTLSGLARSVSAERAEELP</sequence>
<reference key="1">
    <citation type="journal article" date="2004" name="Appl. Environ. Microbiol.">
        <title>Biosynthetic gene cluster of the herbicide phosphinothricin tripeptide from Streptomyces viridochromogenes Tu494.</title>
        <authorList>
            <person name="Schwartz D."/>
            <person name="Berger S."/>
            <person name="Heinzelmann E."/>
            <person name="Muschko K."/>
            <person name="Welzel K."/>
            <person name="Wohlleben W."/>
        </authorList>
    </citation>
    <scope>NUCLEOTIDE SEQUENCE [GENOMIC DNA]</scope>
    <source>
        <strain>DSM 40736 / JCM 4977 / BCRC 1201 / Tue 494</strain>
    </source>
</reference>
<reference key="2">
    <citation type="journal article" date="2005" name="Antimicrob. Agents Chemother.">
        <title>Molecular cloning, sequence analysis, and heterologous expression of the phosphinothricin tripeptide biosynthetic gene cluster from Streptomyces viridochromogenes DSM 40736.</title>
        <authorList>
            <person name="Blodgett J.A."/>
            <person name="Zhang J.K."/>
            <person name="Metcalf W.W."/>
        </authorList>
    </citation>
    <scope>NUCLEOTIDE SEQUENCE [GENOMIC DNA]</scope>
    <source>
        <strain>DSM 40736 / JCM 4977 / BCRC 1201 / Tue 494</strain>
    </source>
</reference>
<reference key="3">
    <citation type="submission" date="2009-02" db="EMBL/GenBank/DDBJ databases">
        <title>Annotation of Streptomyces viridochromogenes strain DSM 40736.</title>
        <authorList>
            <consortium name="The Broad Institute Genome Sequencing Platform"/>
            <consortium name="Broad Institute Microbial Sequencing Center"/>
            <person name="Fischbach M."/>
            <person name="Godfrey P."/>
            <person name="Ward D."/>
            <person name="Young S."/>
            <person name="Zeng Q."/>
            <person name="Koehrsen M."/>
            <person name="Alvarado L."/>
            <person name="Berlin A.M."/>
            <person name="Bochicchio J."/>
            <person name="Borenstein D."/>
            <person name="Chapman S.B."/>
            <person name="Chen Z."/>
            <person name="Engels R."/>
            <person name="Freedman E."/>
            <person name="Gellesch M."/>
            <person name="Goldberg J."/>
            <person name="Griggs A."/>
            <person name="Gujja S."/>
            <person name="Heilman E.R."/>
            <person name="Heiman D.I."/>
            <person name="Hepburn T.A."/>
            <person name="Howarth C."/>
            <person name="Jen D."/>
            <person name="Larson L."/>
            <person name="Lewis B."/>
            <person name="Mehta T."/>
            <person name="Park D."/>
            <person name="Pearson M."/>
            <person name="Richards J."/>
            <person name="Roberts A."/>
            <person name="Saif S."/>
            <person name="Shea T.D."/>
            <person name="Shenoy N."/>
            <person name="Sisk P."/>
            <person name="Stolte C."/>
            <person name="Sykes S.N."/>
            <person name="Thomson T."/>
            <person name="Walk T."/>
            <person name="White J."/>
            <person name="Yandava C."/>
            <person name="Straight P."/>
            <person name="Clardy J."/>
            <person name="Hung D."/>
            <person name="Kolter R."/>
            <person name="Mekalanos J."/>
            <person name="Walker S."/>
            <person name="Walsh C.T."/>
            <person name="Wieland-Brown L.C."/>
            <person name="Haas B."/>
            <person name="Nusbaum C."/>
            <person name="Birren B."/>
        </authorList>
    </citation>
    <scope>NUCLEOTIDE SEQUENCE [LARGE SCALE GENOMIC DNA]</scope>
    <source>
        <strain>DSM 40736 / JCM 4977 / BCRC 1201 / Tue 494</strain>
    </source>
</reference>
<reference key="4">
    <citation type="journal article" date="2005" name="Antimicrob. Agents Chemother.">
        <title>Phosphinothricin tripeptide synthetases in Streptomyces viridochromogenes Tue494.</title>
        <authorList>
            <person name="Schwartz D."/>
            <person name="Grammel N."/>
            <person name="Heinzelmann E."/>
            <person name="Keller U."/>
            <person name="Wohlleben W."/>
        </authorList>
    </citation>
    <scope>FUNCTION</scope>
    <scope>CATALYTIC ACTIVITY</scope>
    <scope>DOMAIN</scope>
    <scope>DISRUPTION PHENOTYPE</scope>
    <source>
        <strain>DSM 40736 / JCM 4977 / BCRC 1201 / Tue 494</strain>
    </source>
</reference>
<feature type="chain" id="PRO_0000454848" description="Phosphinothricin tripeptide synthetase PhsC">
    <location>
        <begin position="1"/>
        <end position="1086"/>
    </location>
</feature>
<feature type="domain" description="Carrier" evidence="1">
    <location>
        <begin position="1006"/>
        <end position="1081"/>
    </location>
</feature>
<feature type="region of interest" description="Disordered" evidence="2">
    <location>
        <begin position="22"/>
        <end position="43"/>
    </location>
</feature>
<feature type="region of interest" description="Condensation" evidence="6">
    <location>
        <begin position="45"/>
        <end position="484"/>
    </location>
</feature>
<feature type="region of interest" description="Adenylation" evidence="6">
    <location>
        <begin position="510"/>
        <end position="901"/>
    </location>
</feature>
<feature type="region of interest" description="Disordered" evidence="2">
    <location>
        <begin position="983"/>
        <end position="1007"/>
    </location>
</feature>
<feature type="modified residue" description="O-(pantetheine 4'-phosphoryl)serine" evidence="1">
    <location>
        <position position="1041"/>
    </location>
</feature>
<feature type="sequence conflict" description="In Ref. 1; CAJ14039." evidence="6" ref="1">
    <original>G</original>
    <variation>V</variation>
    <location>
        <position position="288"/>
    </location>
</feature>
<feature type="sequence conflict" description="In Ref. 1; CAJ14039." evidence="6" ref="1">
    <original>GI</original>
    <variation>AF</variation>
    <location>
        <begin position="673"/>
        <end position="674"/>
    </location>
</feature>
<feature type="sequence conflict" description="In Ref. 1; CAJ14039." evidence="6" ref="1">
    <original>R</original>
    <variation>P</variation>
    <location>
        <position position="739"/>
    </location>
</feature>
<feature type="sequence conflict" description="In Ref. 1; CAJ14039." evidence="6" ref="1">
    <original>E</original>
    <variation>K</variation>
    <location>
        <position position="946"/>
    </location>
</feature>